<name>PROB_RHOPB</name>
<protein>
    <recommendedName>
        <fullName evidence="1">Glutamate 5-kinase</fullName>
        <ecNumber evidence="1">2.7.2.11</ecNumber>
    </recommendedName>
    <alternativeName>
        <fullName evidence="1">Gamma-glutamyl kinase</fullName>
        <shortName evidence="1">GK</shortName>
    </alternativeName>
</protein>
<organism>
    <name type="scientific">Rhodopseudomonas palustris (strain BisB18)</name>
    <dbReference type="NCBI Taxonomy" id="316056"/>
    <lineage>
        <taxon>Bacteria</taxon>
        <taxon>Pseudomonadati</taxon>
        <taxon>Pseudomonadota</taxon>
        <taxon>Alphaproteobacteria</taxon>
        <taxon>Hyphomicrobiales</taxon>
        <taxon>Nitrobacteraceae</taxon>
        <taxon>Rhodopseudomonas</taxon>
    </lineage>
</organism>
<sequence length="376" mass="39666">MHRPELKNFRRIVVKVGSSLLIDSEAGEVKAAWLAALAADIAELHLHGRDVLIVSSGSIALGRSRLKLARGPLKLEESQAAAAVGQIALARIWSEVLGDHGIGAGQILVTLQDTEERRRYLNARSTIGKLLEWRAVPVINENDTVATAEIRYGDNDRLAARVATMSSADLLILLSDIDGLYDAPPGANPDAKLIPVVEQVTAEIEAMAGGAESELSRGGMRTKIEAAKIATTAGTHMLIASGKIDHPLRAIANGGACTWFLTPANPVTARKRWIAGSLEPKGTLTIDAGAVTALRAGKSLLPAGVIRVDGHFARGDAVVVRGPDTDEIGRGLVAYDADDADRIKGHSSPDVMSILGITGRAEMIHRDDLVMGAVPG</sequence>
<accession>Q21D03</accession>
<evidence type="ECO:0000255" key="1">
    <source>
        <dbReference type="HAMAP-Rule" id="MF_00456"/>
    </source>
</evidence>
<dbReference type="EC" id="2.7.2.11" evidence="1"/>
<dbReference type="EMBL" id="CP000301">
    <property type="protein sequence ID" value="ABD85733.1"/>
    <property type="molecule type" value="Genomic_DNA"/>
</dbReference>
<dbReference type="SMR" id="Q21D03"/>
<dbReference type="STRING" id="316056.RPC_0158"/>
<dbReference type="KEGG" id="rpc:RPC_0158"/>
<dbReference type="eggNOG" id="COG0263">
    <property type="taxonomic scope" value="Bacteria"/>
</dbReference>
<dbReference type="HOGENOM" id="CLU_025400_2_0_5"/>
<dbReference type="OrthoDB" id="9804434at2"/>
<dbReference type="UniPathway" id="UPA00098">
    <property type="reaction ID" value="UER00359"/>
</dbReference>
<dbReference type="GO" id="GO:0005829">
    <property type="term" value="C:cytosol"/>
    <property type="evidence" value="ECO:0007669"/>
    <property type="project" value="TreeGrafter"/>
</dbReference>
<dbReference type="GO" id="GO:0005524">
    <property type="term" value="F:ATP binding"/>
    <property type="evidence" value="ECO:0007669"/>
    <property type="project" value="UniProtKB-KW"/>
</dbReference>
<dbReference type="GO" id="GO:0004349">
    <property type="term" value="F:glutamate 5-kinase activity"/>
    <property type="evidence" value="ECO:0007669"/>
    <property type="project" value="UniProtKB-UniRule"/>
</dbReference>
<dbReference type="GO" id="GO:0003723">
    <property type="term" value="F:RNA binding"/>
    <property type="evidence" value="ECO:0007669"/>
    <property type="project" value="InterPro"/>
</dbReference>
<dbReference type="GO" id="GO:0055129">
    <property type="term" value="P:L-proline biosynthetic process"/>
    <property type="evidence" value="ECO:0007669"/>
    <property type="project" value="UniProtKB-UniRule"/>
</dbReference>
<dbReference type="CDD" id="cd04242">
    <property type="entry name" value="AAK_G5K_ProB"/>
    <property type="match status" value="1"/>
</dbReference>
<dbReference type="CDD" id="cd21157">
    <property type="entry name" value="PUA_G5K"/>
    <property type="match status" value="1"/>
</dbReference>
<dbReference type="FunFam" id="2.30.130.10:FF:000007">
    <property type="entry name" value="Glutamate 5-kinase"/>
    <property type="match status" value="1"/>
</dbReference>
<dbReference type="FunFam" id="3.40.1160.10:FF:000018">
    <property type="entry name" value="Glutamate 5-kinase"/>
    <property type="match status" value="1"/>
</dbReference>
<dbReference type="Gene3D" id="3.40.1160.10">
    <property type="entry name" value="Acetylglutamate kinase-like"/>
    <property type="match status" value="1"/>
</dbReference>
<dbReference type="Gene3D" id="2.30.130.10">
    <property type="entry name" value="PUA domain"/>
    <property type="match status" value="1"/>
</dbReference>
<dbReference type="HAMAP" id="MF_00456">
    <property type="entry name" value="ProB"/>
    <property type="match status" value="1"/>
</dbReference>
<dbReference type="InterPro" id="IPR036393">
    <property type="entry name" value="AceGlu_kinase-like_sf"/>
</dbReference>
<dbReference type="InterPro" id="IPR001048">
    <property type="entry name" value="Asp/Glu/Uridylate_kinase"/>
</dbReference>
<dbReference type="InterPro" id="IPR041739">
    <property type="entry name" value="G5K_ProB"/>
</dbReference>
<dbReference type="InterPro" id="IPR001057">
    <property type="entry name" value="Glu/AcGlu_kinase"/>
</dbReference>
<dbReference type="InterPro" id="IPR011529">
    <property type="entry name" value="Glu_5kinase"/>
</dbReference>
<dbReference type="InterPro" id="IPR005715">
    <property type="entry name" value="Glu_5kinase/COase_Synthase"/>
</dbReference>
<dbReference type="InterPro" id="IPR019797">
    <property type="entry name" value="Glutamate_5-kinase_CS"/>
</dbReference>
<dbReference type="InterPro" id="IPR002478">
    <property type="entry name" value="PUA"/>
</dbReference>
<dbReference type="InterPro" id="IPR015947">
    <property type="entry name" value="PUA-like_sf"/>
</dbReference>
<dbReference type="InterPro" id="IPR036974">
    <property type="entry name" value="PUA_sf"/>
</dbReference>
<dbReference type="NCBIfam" id="TIGR01027">
    <property type="entry name" value="proB"/>
    <property type="match status" value="1"/>
</dbReference>
<dbReference type="PANTHER" id="PTHR43654">
    <property type="entry name" value="GLUTAMATE 5-KINASE"/>
    <property type="match status" value="1"/>
</dbReference>
<dbReference type="PANTHER" id="PTHR43654:SF1">
    <property type="entry name" value="ISOPENTENYL PHOSPHATE KINASE"/>
    <property type="match status" value="1"/>
</dbReference>
<dbReference type="Pfam" id="PF00696">
    <property type="entry name" value="AA_kinase"/>
    <property type="match status" value="1"/>
</dbReference>
<dbReference type="Pfam" id="PF01472">
    <property type="entry name" value="PUA"/>
    <property type="match status" value="1"/>
</dbReference>
<dbReference type="PIRSF" id="PIRSF000729">
    <property type="entry name" value="GK"/>
    <property type="match status" value="1"/>
</dbReference>
<dbReference type="PRINTS" id="PR00474">
    <property type="entry name" value="GLU5KINASE"/>
</dbReference>
<dbReference type="SMART" id="SM00359">
    <property type="entry name" value="PUA"/>
    <property type="match status" value="1"/>
</dbReference>
<dbReference type="SUPFAM" id="SSF53633">
    <property type="entry name" value="Carbamate kinase-like"/>
    <property type="match status" value="1"/>
</dbReference>
<dbReference type="SUPFAM" id="SSF88697">
    <property type="entry name" value="PUA domain-like"/>
    <property type="match status" value="1"/>
</dbReference>
<dbReference type="PROSITE" id="PS00902">
    <property type="entry name" value="GLUTAMATE_5_KINASE"/>
    <property type="match status" value="1"/>
</dbReference>
<dbReference type="PROSITE" id="PS50890">
    <property type="entry name" value="PUA"/>
    <property type="match status" value="1"/>
</dbReference>
<reference key="1">
    <citation type="submission" date="2006-03" db="EMBL/GenBank/DDBJ databases">
        <title>Complete sequence of Rhodopseudomonas palustris BisB18.</title>
        <authorList>
            <consortium name="US DOE Joint Genome Institute"/>
            <person name="Copeland A."/>
            <person name="Lucas S."/>
            <person name="Lapidus A."/>
            <person name="Barry K."/>
            <person name="Detter J.C."/>
            <person name="Glavina del Rio T."/>
            <person name="Hammon N."/>
            <person name="Israni S."/>
            <person name="Dalin E."/>
            <person name="Tice H."/>
            <person name="Pitluck S."/>
            <person name="Chain P."/>
            <person name="Malfatti S."/>
            <person name="Shin M."/>
            <person name="Vergez L."/>
            <person name="Schmutz J."/>
            <person name="Larimer F."/>
            <person name="Land M."/>
            <person name="Hauser L."/>
            <person name="Pelletier D.A."/>
            <person name="Kyrpides N."/>
            <person name="Anderson I."/>
            <person name="Oda Y."/>
            <person name="Harwood C.S."/>
            <person name="Richardson P."/>
        </authorList>
    </citation>
    <scope>NUCLEOTIDE SEQUENCE [LARGE SCALE GENOMIC DNA]</scope>
    <source>
        <strain>BisB18</strain>
    </source>
</reference>
<proteinExistence type="inferred from homology"/>
<comment type="function">
    <text evidence="1">Catalyzes the transfer of a phosphate group to glutamate to form L-glutamate 5-phosphate.</text>
</comment>
<comment type="catalytic activity">
    <reaction evidence="1">
        <text>L-glutamate + ATP = L-glutamyl 5-phosphate + ADP</text>
        <dbReference type="Rhea" id="RHEA:14877"/>
        <dbReference type="ChEBI" id="CHEBI:29985"/>
        <dbReference type="ChEBI" id="CHEBI:30616"/>
        <dbReference type="ChEBI" id="CHEBI:58274"/>
        <dbReference type="ChEBI" id="CHEBI:456216"/>
        <dbReference type="EC" id="2.7.2.11"/>
    </reaction>
</comment>
<comment type="pathway">
    <text evidence="1">Amino-acid biosynthesis; L-proline biosynthesis; L-glutamate 5-semialdehyde from L-glutamate: step 1/2.</text>
</comment>
<comment type="subcellular location">
    <subcellularLocation>
        <location evidence="1">Cytoplasm</location>
    </subcellularLocation>
</comment>
<comment type="similarity">
    <text evidence="1">Belongs to the glutamate 5-kinase family.</text>
</comment>
<feature type="chain" id="PRO_0000252996" description="Glutamate 5-kinase">
    <location>
        <begin position="1"/>
        <end position="376"/>
    </location>
</feature>
<feature type="domain" description="PUA" evidence="1">
    <location>
        <begin position="281"/>
        <end position="358"/>
    </location>
</feature>
<feature type="binding site" evidence="1">
    <location>
        <position position="15"/>
    </location>
    <ligand>
        <name>ATP</name>
        <dbReference type="ChEBI" id="CHEBI:30616"/>
    </ligand>
</feature>
<feature type="binding site" evidence="1">
    <location>
        <position position="56"/>
    </location>
    <ligand>
        <name>substrate</name>
    </ligand>
</feature>
<feature type="binding site" evidence="1">
    <location>
        <position position="143"/>
    </location>
    <ligand>
        <name>substrate</name>
    </ligand>
</feature>
<feature type="binding site" evidence="1">
    <location>
        <position position="155"/>
    </location>
    <ligand>
        <name>substrate</name>
    </ligand>
</feature>
<feature type="binding site" evidence="1">
    <location>
        <begin position="175"/>
        <end position="176"/>
    </location>
    <ligand>
        <name>ATP</name>
        <dbReference type="ChEBI" id="CHEBI:30616"/>
    </ligand>
</feature>
<gene>
    <name evidence="1" type="primary">proB</name>
    <name type="ordered locus">RPC_0158</name>
</gene>
<keyword id="KW-0028">Amino-acid biosynthesis</keyword>
<keyword id="KW-0067">ATP-binding</keyword>
<keyword id="KW-0963">Cytoplasm</keyword>
<keyword id="KW-0418">Kinase</keyword>
<keyword id="KW-0547">Nucleotide-binding</keyword>
<keyword id="KW-0641">Proline biosynthesis</keyword>
<keyword id="KW-0808">Transferase</keyword>